<protein>
    <recommendedName>
        <fullName>Endochitinase 1</fullName>
        <ecNumber>3.2.1.14</ecNumber>
    </recommendedName>
    <alternativeName>
        <fullName>Chitinase 1</fullName>
    </alternativeName>
</protein>
<gene>
    <name type="primary">chit1</name>
    <name type="synonym">chit42</name>
</gene>
<sequence length="423" mass="45945">MPSLFAQSLAIIATLQATLGLATPVSAPDTVIGKHAGGYVNAVYFTNWGIYGRNYQPADLPASQISHVLYSFLNLSNNGTVYSGDSWADIDKHYPNDSWNDVGTNVYGCVKQLYLLKKANRNMKTMLSIGGWTWSTNFPAAASTAATRSNFAKSAVTIMKDWGFDGIDVDWEYPADDVQATNMVLLLQAIREELDAYAAKFAQGYHFQLSIAAPAGPANYNKLHLGDLGKVLDYINLMAYDFSGSWSNSSAHNANLYAIRANLNAPFNTDHAVNDYIKGGVPASKIVLALPIYGNSFQKTNGIGKPFSGAGDGSWENGIWDYKVHSKAGADGIYDDGDKGYYSYDPSVKELISIDTPDITKDKVTYLKSKGLGGSMFWEASSDRSGSQSLIGTSSNKLGGPDSTENLLNYPDSKYDNMRKQMA</sequence>
<proteinExistence type="evidence at protein level"/>
<accession>O14456</accession>
<evidence type="ECO:0000250" key="1"/>
<evidence type="ECO:0000255" key="2"/>
<evidence type="ECO:0000255" key="3">
    <source>
        <dbReference type="PROSITE-ProRule" id="PRU01258"/>
    </source>
</evidence>
<evidence type="ECO:0000256" key="4">
    <source>
        <dbReference type="SAM" id="MobiDB-lite"/>
    </source>
</evidence>
<evidence type="ECO:0000269" key="5">
    <source>
    </source>
</evidence>
<evidence type="ECO:0000269" key="6">
    <source>
    </source>
</evidence>
<evidence type="ECO:0000305" key="7"/>
<comment type="function">
    <text evidence="5 6">Secreted chitinase involved in the degradation of chitin, a component of the cell walls of fungi and exoskeletal elements of some animals (including worms and arthropods). Participates in the infection process and directly acts in the penetration process of the host cuticle.</text>
</comment>
<comment type="catalytic activity">
    <reaction evidence="5 6">
        <text>Random endo-hydrolysis of N-acetyl-beta-D-glucosaminide (1-&gt;4)-beta-linkages in chitin and chitodextrins.</text>
        <dbReference type="EC" id="3.2.1.14"/>
    </reaction>
</comment>
<comment type="subcellular location">
    <subcellularLocation>
        <location evidence="1">Secreted</location>
    </subcellularLocation>
</comment>
<comment type="biotechnology">
    <text evidence="6">When expressed in tobacco plants, chit1 confers resistance against Rhizoctonia solani.</text>
</comment>
<comment type="similarity">
    <text evidence="7">Belongs to the glycosyl hydrolase 18 family. Chitinase class V subfamily.</text>
</comment>
<name>CHI1_METAN</name>
<dbReference type="EC" id="3.2.1.14"/>
<dbReference type="EMBL" id="AF027497">
    <property type="protein sequence ID" value="AAB81998.1"/>
    <property type="molecule type" value="mRNA"/>
</dbReference>
<dbReference type="EMBL" id="AF027498">
    <property type="protein sequence ID" value="AAB81999.1"/>
    <property type="molecule type" value="Genomic_DNA"/>
</dbReference>
<dbReference type="SMR" id="O14456"/>
<dbReference type="CAZy" id="GH18">
    <property type="family name" value="Glycoside Hydrolase Family 18"/>
</dbReference>
<dbReference type="GlyCosmos" id="O14456">
    <property type="glycosylation" value="4 sites, No reported glycans"/>
</dbReference>
<dbReference type="VEuPathDB" id="FungiDB:MAN_01370"/>
<dbReference type="GO" id="GO:0005576">
    <property type="term" value="C:extracellular region"/>
    <property type="evidence" value="ECO:0007669"/>
    <property type="project" value="UniProtKB-SubCell"/>
</dbReference>
<dbReference type="GO" id="GO:0008061">
    <property type="term" value="F:chitin binding"/>
    <property type="evidence" value="ECO:0007669"/>
    <property type="project" value="UniProtKB-KW"/>
</dbReference>
<dbReference type="GO" id="GO:0008843">
    <property type="term" value="F:endochitinase activity"/>
    <property type="evidence" value="ECO:0007669"/>
    <property type="project" value="UniProtKB-EC"/>
</dbReference>
<dbReference type="GO" id="GO:0006032">
    <property type="term" value="P:chitin catabolic process"/>
    <property type="evidence" value="ECO:0007669"/>
    <property type="project" value="UniProtKB-KW"/>
</dbReference>
<dbReference type="GO" id="GO:0000272">
    <property type="term" value="P:polysaccharide catabolic process"/>
    <property type="evidence" value="ECO:0007669"/>
    <property type="project" value="UniProtKB-KW"/>
</dbReference>
<dbReference type="CDD" id="cd06548">
    <property type="entry name" value="GH18_chitinase"/>
    <property type="match status" value="1"/>
</dbReference>
<dbReference type="FunFam" id="3.20.20.80:FF:000075">
    <property type="entry name" value="Sporulation-specific chitinase"/>
    <property type="match status" value="1"/>
</dbReference>
<dbReference type="Gene3D" id="3.10.50.10">
    <property type="match status" value="1"/>
</dbReference>
<dbReference type="Gene3D" id="3.20.20.80">
    <property type="entry name" value="Glycosidases"/>
    <property type="match status" value="1"/>
</dbReference>
<dbReference type="InterPro" id="IPR011583">
    <property type="entry name" value="Chitinase_II/V-like_cat"/>
</dbReference>
<dbReference type="InterPro" id="IPR029070">
    <property type="entry name" value="Chitinase_insertion_sf"/>
</dbReference>
<dbReference type="InterPro" id="IPR001223">
    <property type="entry name" value="Glyco_hydro18_cat"/>
</dbReference>
<dbReference type="InterPro" id="IPR001579">
    <property type="entry name" value="Glyco_hydro_18_chit_AS"/>
</dbReference>
<dbReference type="InterPro" id="IPR017853">
    <property type="entry name" value="Glycoside_hydrolase_SF"/>
</dbReference>
<dbReference type="InterPro" id="IPR050314">
    <property type="entry name" value="Glycosyl_Hydrlase_18"/>
</dbReference>
<dbReference type="PANTHER" id="PTHR11177">
    <property type="entry name" value="CHITINASE"/>
    <property type="match status" value="1"/>
</dbReference>
<dbReference type="PANTHER" id="PTHR11177:SF365">
    <property type="entry name" value="ENDOCHITINASE B"/>
    <property type="match status" value="1"/>
</dbReference>
<dbReference type="Pfam" id="PF00704">
    <property type="entry name" value="Glyco_hydro_18"/>
    <property type="match status" value="1"/>
</dbReference>
<dbReference type="SMART" id="SM00636">
    <property type="entry name" value="Glyco_18"/>
    <property type="match status" value="1"/>
</dbReference>
<dbReference type="SUPFAM" id="SSF51445">
    <property type="entry name" value="(Trans)glycosidases"/>
    <property type="match status" value="1"/>
</dbReference>
<dbReference type="SUPFAM" id="SSF54556">
    <property type="entry name" value="Chitinase insertion domain"/>
    <property type="match status" value="1"/>
</dbReference>
<dbReference type="PROSITE" id="PS01095">
    <property type="entry name" value="GH18_1"/>
    <property type="match status" value="1"/>
</dbReference>
<dbReference type="PROSITE" id="PS51910">
    <property type="entry name" value="GH18_2"/>
    <property type="match status" value="1"/>
</dbReference>
<feature type="signal peptide" evidence="2">
    <location>
        <begin position="1"/>
        <end position="22"/>
    </location>
</feature>
<feature type="chain" id="PRO_0000429864" description="Endochitinase 1">
    <location>
        <begin position="23"/>
        <end position="423"/>
    </location>
</feature>
<feature type="domain" description="GH18" evidence="3">
    <location>
        <begin position="39"/>
        <end position="401"/>
    </location>
</feature>
<feature type="region of interest" description="Disordered" evidence="4">
    <location>
        <begin position="380"/>
        <end position="423"/>
    </location>
</feature>
<feature type="compositionally biased region" description="Polar residues" evidence="4">
    <location>
        <begin position="383"/>
        <end position="407"/>
    </location>
</feature>
<feature type="compositionally biased region" description="Basic and acidic residues" evidence="4">
    <location>
        <begin position="413"/>
        <end position="423"/>
    </location>
</feature>
<feature type="active site" description="Proton donor" evidence="3">
    <location>
        <position position="172"/>
    </location>
</feature>
<feature type="binding site" evidence="3">
    <location>
        <begin position="103"/>
        <end position="104"/>
    </location>
    <ligand>
        <name>chitin</name>
        <dbReference type="ChEBI" id="CHEBI:17029"/>
    </ligand>
</feature>
<feature type="binding site" evidence="3">
    <location>
        <begin position="130"/>
        <end position="133"/>
    </location>
    <ligand>
        <name>chitin</name>
        <dbReference type="ChEBI" id="CHEBI:17029"/>
    </ligand>
</feature>
<feature type="binding site" evidence="3">
    <location>
        <position position="173"/>
    </location>
    <ligand>
        <name>chitin</name>
        <dbReference type="ChEBI" id="CHEBI:17029"/>
    </ligand>
</feature>
<feature type="binding site" evidence="3">
    <location>
        <begin position="238"/>
        <end position="241"/>
    </location>
    <ligand>
        <name>chitin</name>
        <dbReference type="ChEBI" id="CHEBI:17029"/>
    </ligand>
</feature>
<feature type="binding site" evidence="3">
    <location>
        <position position="378"/>
    </location>
    <ligand>
        <name>chitin</name>
        <dbReference type="ChEBI" id="CHEBI:17029"/>
    </ligand>
</feature>
<feature type="glycosylation site" description="N-linked (GlcNAc...) asparagine" evidence="2">
    <location>
        <position position="74"/>
    </location>
</feature>
<feature type="glycosylation site" description="N-linked (GlcNAc...) asparagine" evidence="2">
    <location>
        <position position="78"/>
    </location>
</feature>
<feature type="glycosylation site" description="N-linked (GlcNAc...) asparagine" evidence="2">
    <location>
        <position position="96"/>
    </location>
</feature>
<feature type="glycosylation site" description="N-linked (GlcNAc...) asparagine" evidence="2">
    <location>
        <position position="248"/>
    </location>
</feature>
<organism>
    <name type="scientific">Metarhizium anisopliae</name>
    <name type="common">Entomophthora anisopliae</name>
    <dbReference type="NCBI Taxonomy" id="5530"/>
    <lineage>
        <taxon>Eukaryota</taxon>
        <taxon>Fungi</taxon>
        <taxon>Dikarya</taxon>
        <taxon>Ascomycota</taxon>
        <taxon>Pezizomycotina</taxon>
        <taxon>Sordariomycetes</taxon>
        <taxon>Hypocreomycetidae</taxon>
        <taxon>Hypocreales</taxon>
        <taxon>Clavicipitaceae</taxon>
        <taxon>Metarhizium</taxon>
    </lineage>
</organism>
<keyword id="KW-0119">Carbohydrate metabolism</keyword>
<keyword id="KW-0146">Chitin degradation</keyword>
<keyword id="KW-0147">Chitin-binding</keyword>
<keyword id="KW-0325">Glycoprotein</keyword>
<keyword id="KW-0326">Glycosidase</keyword>
<keyword id="KW-0378">Hydrolase</keyword>
<keyword id="KW-0624">Polysaccharide degradation</keyword>
<keyword id="KW-0964">Secreted</keyword>
<keyword id="KW-0732">Signal</keyword>
<keyword id="KW-0843">Virulence</keyword>
<reference key="1">
    <citation type="journal article" date="1998" name="Curr. Microbiol.">
        <title>A chitinase encoding gene (chit1 gene) from the entomopathogen Metarhizium anisopliae: isolation and characterization of genomic and full-length cDNA.</title>
        <authorList>
            <person name="Bogo M.R."/>
            <person name="Rota C.A."/>
            <person name="Pinto H. Jr."/>
            <person name="Ocampos M."/>
            <person name="Correa C.T."/>
            <person name="Vainstein M.H."/>
            <person name="Schrank A."/>
        </authorList>
    </citation>
    <scope>NUCLEOTIDE SEQUENCE [GENOMIC DNA / MRNA]</scope>
    <source>
        <strain>E6</strain>
    </source>
</reference>
<reference key="2">
    <citation type="journal article" date="2003" name="Can. J. Microbiol.">
        <title>Expression and characterization of the 42 kDa chitinase of the biocontrol fungus Metarhizium anisopliae in Escherichia coli.</title>
        <authorList>
            <person name="Baratto C.M."/>
            <person name="da Silva M.V."/>
            <person name="Santi L."/>
            <person name="Passaglia L."/>
            <person name="Schrank I.S."/>
            <person name="Vainstein M.H."/>
            <person name="Schrank A."/>
        </authorList>
    </citation>
    <scope>FUNCTION</scope>
    <scope>CATALYTIC ACTIVITY</scope>
</reference>
<reference key="3">
    <citation type="journal article" date="2010" name="Appl. Biochem. Biotechnol.">
        <title>Expression of a chitinase gene from Metarhizium anisopliae in tobacco plants confers resistance against Rhizoctonia solani.</title>
        <authorList>
            <person name="Kern M.F."/>
            <person name="Maraschin Sde F."/>
            <person name="Vom Endt D."/>
            <person name="Schrank A."/>
            <person name="Vainstein M.H."/>
            <person name="Pasquali G."/>
        </authorList>
    </citation>
    <scope>FUNCTION</scope>
    <scope>CATALYTIC ACTIVITY</scope>
    <scope>BIOTECHNOLOGY</scope>
</reference>